<protein>
    <recommendedName>
        <fullName evidence="1">Acetyl-coenzyme A carboxylase carboxyl transferase subunit beta</fullName>
        <shortName evidence="1">ACCase subunit beta</shortName>
        <shortName evidence="1">Acetyl-CoA carboxylase carboxyltransferase subunit beta</shortName>
        <ecNumber evidence="1">2.1.3.15</ecNumber>
    </recommendedName>
</protein>
<reference key="1">
    <citation type="journal article" date="2008" name="Chem. Biol. Interact.">
        <title>Extending the Bacillus cereus group genomics to putative food-borne pathogens of different toxicity.</title>
        <authorList>
            <person name="Lapidus A."/>
            <person name="Goltsman E."/>
            <person name="Auger S."/>
            <person name="Galleron N."/>
            <person name="Segurens B."/>
            <person name="Dossat C."/>
            <person name="Land M.L."/>
            <person name="Broussolle V."/>
            <person name="Brillard J."/>
            <person name="Guinebretiere M.-H."/>
            <person name="Sanchis V."/>
            <person name="Nguen-the C."/>
            <person name="Lereclus D."/>
            <person name="Richardson P."/>
            <person name="Wincker P."/>
            <person name="Weissenbach J."/>
            <person name="Ehrlich S.D."/>
            <person name="Sorokin A."/>
        </authorList>
    </citation>
    <scope>NUCLEOTIDE SEQUENCE [LARGE SCALE GENOMIC DNA]</scope>
    <source>
        <strain>KBAB4</strain>
    </source>
</reference>
<accession>A9VJR3</accession>
<feature type="chain" id="PRO_0000389689" description="Acetyl-coenzyme A carboxylase carboxyl transferase subunit beta">
    <location>
        <begin position="1"/>
        <end position="289"/>
    </location>
</feature>
<feature type="domain" description="CoA carboxyltransferase N-terminal" evidence="2">
    <location>
        <begin position="28"/>
        <end position="289"/>
    </location>
</feature>
<feature type="zinc finger region" description="C4-type" evidence="1">
    <location>
        <begin position="32"/>
        <end position="54"/>
    </location>
</feature>
<feature type="binding site" evidence="1">
    <location>
        <position position="32"/>
    </location>
    <ligand>
        <name>Zn(2+)</name>
        <dbReference type="ChEBI" id="CHEBI:29105"/>
    </ligand>
</feature>
<feature type="binding site" evidence="1">
    <location>
        <position position="35"/>
    </location>
    <ligand>
        <name>Zn(2+)</name>
        <dbReference type="ChEBI" id="CHEBI:29105"/>
    </ligand>
</feature>
<feature type="binding site" evidence="1">
    <location>
        <position position="51"/>
    </location>
    <ligand>
        <name>Zn(2+)</name>
        <dbReference type="ChEBI" id="CHEBI:29105"/>
    </ligand>
</feature>
<feature type="binding site" evidence="1">
    <location>
        <position position="54"/>
    </location>
    <ligand>
        <name>Zn(2+)</name>
        <dbReference type="ChEBI" id="CHEBI:29105"/>
    </ligand>
</feature>
<comment type="function">
    <text evidence="1">Component of the acetyl coenzyme A carboxylase (ACC) complex. Biotin carboxylase (BC) catalyzes the carboxylation of biotin on its carrier protein (BCCP) and then the CO(2) group is transferred by the transcarboxylase to acetyl-CoA to form malonyl-CoA.</text>
</comment>
<comment type="catalytic activity">
    <reaction evidence="1">
        <text>N(6)-carboxybiotinyl-L-lysyl-[protein] + acetyl-CoA = N(6)-biotinyl-L-lysyl-[protein] + malonyl-CoA</text>
        <dbReference type="Rhea" id="RHEA:54728"/>
        <dbReference type="Rhea" id="RHEA-COMP:10505"/>
        <dbReference type="Rhea" id="RHEA-COMP:10506"/>
        <dbReference type="ChEBI" id="CHEBI:57288"/>
        <dbReference type="ChEBI" id="CHEBI:57384"/>
        <dbReference type="ChEBI" id="CHEBI:83144"/>
        <dbReference type="ChEBI" id="CHEBI:83145"/>
        <dbReference type="EC" id="2.1.3.15"/>
    </reaction>
</comment>
<comment type="cofactor">
    <cofactor evidence="1">
        <name>Zn(2+)</name>
        <dbReference type="ChEBI" id="CHEBI:29105"/>
    </cofactor>
    <text evidence="1">Binds 1 zinc ion per subunit.</text>
</comment>
<comment type="pathway">
    <text evidence="1">Lipid metabolism; malonyl-CoA biosynthesis; malonyl-CoA from acetyl-CoA: step 1/1.</text>
</comment>
<comment type="subunit">
    <text evidence="1">Acetyl-CoA carboxylase is a heterohexamer composed of biotin carboxyl carrier protein (AccB), biotin carboxylase (AccC) and two subunits each of ACCase subunit alpha (AccA) and ACCase subunit beta (AccD).</text>
</comment>
<comment type="subcellular location">
    <subcellularLocation>
        <location evidence="1">Cytoplasm</location>
    </subcellularLocation>
</comment>
<comment type="similarity">
    <text evidence="1">Belongs to the AccD/PCCB family.</text>
</comment>
<name>ACCD_BACMK</name>
<dbReference type="EC" id="2.1.3.15" evidence="1"/>
<dbReference type="EMBL" id="CP000903">
    <property type="protein sequence ID" value="ABY45590.1"/>
    <property type="molecule type" value="Genomic_DNA"/>
</dbReference>
<dbReference type="RefSeq" id="WP_012261809.1">
    <property type="nucleotide sequence ID" value="NC_010184.1"/>
</dbReference>
<dbReference type="SMR" id="A9VJR3"/>
<dbReference type="KEGG" id="bwe:BcerKBAB4_4431"/>
<dbReference type="eggNOG" id="COG0777">
    <property type="taxonomic scope" value="Bacteria"/>
</dbReference>
<dbReference type="HOGENOM" id="CLU_015486_1_1_9"/>
<dbReference type="UniPathway" id="UPA00655">
    <property type="reaction ID" value="UER00711"/>
</dbReference>
<dbReference type="Proteomes" id="UP000002154">
    <property type="component" value="Chromosome"/>
</dbReference>
<dbReference type="GO" id="GO:0009317">
    <property type="term" value="C:acetyl-CoA carboxylase complex"/>
    <property type="evidence" value="ECO:0007669"/>
    <property type="project" value="InterPro"/>
</dbReference>
<dbReference type="GO" id="GO:0003989">
    <property type="term" value="F:acetyl-CoA carboxylase activity"/>
    <property type="evidence" value="ECO:0007669"/>
    <property type="project" value="InterPro"/>
</dbReference>
<dbReference type="GO" id="GO:0005524">
    <property type="term" value="F:ATP binding"/>
    <property type="evidence" value="ECO:0007669"/>
    <property type="project" value="UniProtKB-KW"/>
</dbReference>
<dbReference type="GO" id="GO:0016743">
    <property type="term" value="F:carboxyl- or carbamoyltransferase activity"/>
    <property type="evidence" value="ECO:0007669"/>
    <property type="project" value="UniProtKB-UniRule"/>
</dbReference>
<dbReference type="GO" id="GO:0008270">
    <property type="term" value="F:zinc ion binding"/>
    <property type="evidence" value="ECO:0007669"/>
    <property type="project" value="UniProtKB-UniRule"/>
</dbReference>
<dbReference type="GO" id="GO:0006633">
    <property type="term" value="P:fatty acid biosynthetic process"/>
    <property type="evidence" value="ECO:0007669"/>
    <property type="project" value="UniProtKB-KW"/>
</dbReference>
<dbReference type="GO" id="GO:2001295">
    <property type="term" value="P:malonyl-CoA biosynthetic process"/>
    <property type="evidence" value="ECO:0007669"/>
    <property type="project" value="UniProtKB-UniRule"/>
</dbReference>
<dbReference type="Gene3D" id="3.90.226.10">
    <property type="entry name" value="2-enoyl-CoA Hydratase, Chain A, domain 1"/>
    <property type="match status" value="1"/>
</dbReference>
<dbReference type="HAMAP" id="MF_01395">
    <property type="entry name" value="AcetylCoA_CT_beta"/>
    <property type="match status" value="1"/>
</dbReference>
<dbReference type="InterPro" id="IPR034733">
    <property type="entry name" value="AcCoA_carboxyl_beta"/>
</dbReference>
<dbReference type="InterPro" id="IPR000438">
    <property type="entry name" value="Acetyl_CoA_COase_Trfase_b_su"/>
</dbReference>
<dbReference type="InterPro" id="IPR029045">
    <property type="entry name" value="ClpP/crotonase-like_dom_sf"/>
</dbReference>
<dbReference type="InterPro" id="IPR011762">
    <property type="entry name" value="COA_CT_N"/>
</dbReference>
<dbReference type="InterPro" id="IPR041010">
    <property type="entry name" value="Znf-ACC"/>
</dbReference>
<dbReference type="NCBIfam" id="TIGR00515">
    <property type="entry name" value="accD"/>
    <property type="match status" value="1"/>
</dbReference>
<dbReference type="PANTHER" id="PTHR42995">
    <property type="entry name" value="ACETYL-COENZYME A CARBOXYLASE CARBOXYL TRANSFERASE SUBUNIT BETA, CHLOROPLASTIC"/>
    <property type="match status" value="1"/>
</dbReference>
<dbReference type="PANTHER" id="PTHR42995:SF5">
    <property type="entry name" value="ACETYL-COENZYME A CARBOXYLASE CARBOXYL TRANSFERASE SUBUNIT BETA, CHLOROPLASTIC"/>
    <property type="match status" value="1"/>
</dbReference>
<dbReference type="Pfam" id="PF01039">
    <property type="entry name" value="Carboxyl_trans"/>
    <property type="match status" value="1"/>
</dbReference>
<dbReference type="Pfam" id="PF17848">
    <property type="entry name" value="Zn_ribbon_ACC"/>
    <property type="match status" value="1"/>
</dbReference>
<dbReference type="PRINTS" id="PR01070">
    <property type="entry name" value="ACCCTRFRASEB"/>
</dbReference>
<dbReference type="SUPFAM" id="SSF52096">
    <property type="entry name" value="ClpP/crotonase"/>
    <property type="match status" value="1"/>
</dbReference>
<dbReference type="PROSITE" id="PS50980">
    <property type="entry name" value="COA_CT_NTER"/>
    <property type="match status" value="1"/>
</dbReference>
<gene>
    <name evidence="1" type="primary">accD</name>
    <name type="ordered locus">BcerKBAB4_4431</name>
</gene>
<organism>
    <name type="scientific">Bacillus mycoides (strain KBAB4)</name>
    <name type="common">Bacillus weihenstephanensis</name>
    <dbReference type="NCBI Taxonomy" id="315730"/>
    <lineage>
        <taxon>Bacteria</taxon>
        <taxon>Bacillati</taxon>
        <taxon>Bacillota</taxon>
        <taxon>Bacilli</taxon>
        <taxon>Bacillales</taxon>
        <taxon>Bacillaceae</taxon>
        <taxon>Bacillus</taxon>
        <taxon>Bacillus cereus group</taxon>
    </lineage>
</organism>
<sequence>MLRDLFVKKKKYAAIPSEQVRKDVPDGVMTKCPKCKKIMYTKELLKNLKVCVNCGYHHPMNAWERLDSILDEGSFREYDKEMVSLNPLEFPGYEEKLENDRKKTKLNEAVVTGEGTIDDMLVVVAVMDSRFRMGSMGSVVGEKIARAVEKAYDLQVPFIIFTASGGARMQEGILSLMQMAKTSVALKKHSNAGGLFISVMTHPTTGGVSASFASLGDYNLAEPGALIGFAGRRVIEQTVREKLPEDFQTAEFLLEHGQLDAVVHRDDMRESLRKILEVHQGGGMAVWQS</sequence>
<evidence type="ECO:0000255" key="1">
    <source>
        <dbReference type="HAMAP-Rule" id="MF_01395"/>
    </source>
</evidence>
<evidence type="ECO:0000255" key="2">
    <source>
        <dbReference type="PROSITE-ProRule" id="PRU01136"/>
    </source>
</evidence>
<proteinExistence type="inferred from homology"/>
<keyword id="KW-0067">ATP-binding</keyword>
<keyword id="KW-0963">Cytoplasm</keyword>
<keyword id="KW-0275">Fatty acid biosynthesis</keyword>
<keyword id="KW-0276">Fatty acid metabolism</keyword>
<keyword id="KW-0444">Lipid biosynthesis</keyword>
<keyword id="KW-0443">Lipid metabolism</keyword>
<keyword id="KW-0479">Metal-binding</keyword>
<keyword id="KW-0547">Nucleotide-binding</keyword>
<keyword id="KW-0808">Transferase</keyword>
<keyword id="KW-0862">Zinc</keyword>
<keyword id="KW-0863">Zinc-finger</keyword>